<comment type="function">
    <text evidence="1">One of the components of the core complex of photosystem II (PSII). PSII is a light-driven water:plastoquinone oxidoreductase that uses light energy to abstract electrons from H(2)O, generating O(2) and a proton gradient subsequently used for ATP formation. It consists of a core antenna complex that captures photons, and an electron transfer chain that converts photonic excitation into a charge separation. This subunit is found at the monomer-monomer interface and is required for correct PSII assembly and/or dimerization.</text>
</comment>
<comment type="subunit">
    <text evidence="1">PSII is composed of 1 copy each of membrane proteins PsbA, PsbB, PsbC, PsbD, PsbE, PsbF, PsbH, PsbI, PsbJ, PsbK, PsbL, PsbM, PsbT, PsbX, PsbY, PsbZ, Psb30/Ycf12, at least 3 peripheral proteins of the oxygen-evolving complex and a large number of cofactors. It forms dimeric complexes.</text>
</comment>
<comment type="subcellular location">
    <subcellularLocation>
        <location evidence="1">Plastid</location>
        <location evidence="1">Chloroplast thylakoid membrane</location>
        <topology evidence="1">Single-pass membrane protein</topology>
    </subcellularLocation>
</comment>
<comment type="similarity">
    <text evidence="1">Belongs to the PsbL family.</text>
</comment>
<gene>
    <name evidence="1" type="primary">psbL</name>
</gene>
<name>PSBL_MUSAC</name>
<feature type="chain" id="PRO_0000249580" description="Photosystem II reaction center protein L">
    <location>
        <begin position="1"/>
        <end position="38"/>
    </location>
</feature>
<feature type="transmembrane region" description="Helical" evidence="1">
    <location>
        <begin position="17"/>
        <end position="37"/>
    </location>
</feature>
<evidence type="ECO:0000255" key="1">
    <source>
        <dbReference type="HAMAP-Rule" id="MF_01317"/>
    </source>
</evidence>
<sequence>MTQSNPNEQNVELNRTSLYWGLLLIFVLAVLFSNYFFN</sequence>
<dbReference type="EMBL" id="AY874841">
    <property type="protein sequence ID" value="AAX56772.1"/>
    <property type="molecule type" value="Genomic_DNA"/>
</dbReference>
<dbReference type="SMR" id="Q2THP9"/>
<dbReference type="GO" id="GO:0009535">
    <property type="term" value="C:chloroplast thylakoid membrane"/>
    <property type="evidence" value="ECO:0007669"/>
    <property type="project" value="UniProtKB-SubCell"/>
</dbReference>
<dbReference type="GO" id="GO:0009539">
    <property type="term" value="C:photosystem II reaction center"/>
    <property type="evidence" value="ECO:0007669"/>
    <property type="project" value="InterPro"/>
</dbReference>
<dbReference type="GO" id="GO:0015979">
    <property type="term" value="P:photosynthesis"/>
    <property type="evidence" value="ECO:0007669"/>
    <property type="project" value="UniProtKB-UniRule"/>
</dbReference>
<dbReference type="HAMAP" id="MF_01317">
    <property type="entry name" value="PSII_PsbL"/>
    <property type="match status" value="1"/>
</dbReference>
<dbReference type="InterPro" id="IPR003372">
    <property type="entry name" value="PSII_PsbL"/>
</dbReference>
<dbReference type="InterPro" id="IPR037266">
    <property type="entry name" value="PSII_PsbL_sf"/>
</dbReference>
<dbReference type="NCBIfam" id="NF001972">
    <property type="entry name" value="PRK00753.1"/>
    <property type="match status" value="1"/>
</dbReference>
<dbReference type="Pfam" id="PF02419">
    <property type="entry name" value="PsbL"/>
    <property type="match status" value="1"/>
</dbReference>
<dbReference type="SUPFAM" id="SSF161017">
    <property type="entry name" value="Photosystem II reaction center protein L, PsbL"/>
    <property type="match status" value="1"/>
</dbReference>
<accession>Q2THP9</accession>
<organism>
    <name type="scientific">Musa acuminata</name>
    <name type="common">Banana</name>
    <name type="synonym">Musa cavendishii</name>
    <dbReference type="NCBI Taxonomy" id="4641"/>
    <lineage>
        <taxon>Eukaryota</taxon>
        <taxon>Viridiplantae</taxon>
        <taxon>Streptophyta</taxon>
        <taxon>Embryophyta</taxon>
        <taxon>Tracheophyta</taxon>
        <taxon>Spermatophyta</taxon>
        <taxon>Magnoliopsida</taxon>
        <taxon>Liliopsida</taxon>
        <taxon>Zingiberales</taxon>
        <taxon>Musaceae</taxon>
        <taxon>Musa</taxon>
    </lineage>
</organism>
<proteinExistence type="inferred from homology"/>
<reference key="1">
    <citation type="submission" date="2005-01" db="EMBL/GenBank/DDBJ databases">
        <title>Genealogical relationships of banana cultivars inferred from chloroplast DNA sequence analysis.</title>
        <authorList>
            <person name="Swangpol S."/>
            <person name="Volkaert H.A."/>
            <person name="Sotto R.C."/>
            <person name="Seelanan T."/>
        </authorList>
    </citation>
    <scope>NUCLEOTIDE SEQUENCE [GENOMIC DNA]</scope>
</reference>
<keyword id="KW-0150">Chloroplast</keyword>
<keyword id="KW-0472">Membrane</keyword>
<keyword id="KW-0602">Photosynthesis</keyword>
<keyword id="KW-0604">Photosystem II</keyword>
<keyword id="KW-0934">Plastid</keyword>
<keyword id="KW-0674">Reaction center</keyword>
<keyword id="KW-0793">Thylakoid</keyword>
<keyword id="KW-0812">Transmembrane</keyword>
<keyword id="KW-1133">Transmembrane helix</keyword>
<geneLocation type="chloroplast"/>
<protein>
    <recommendedName>
        <fullName evidence="1">Photosystem II reaction center protein L</fullName>
        <shortName evidence="1">PSII-L</shortName>
    </recommendedName>
</protein>